<name>PHF1_CLOPA</name>
<accession>P29166</accession>
<protein>
    <recommendedName>
        <fullName>Iron hydrogenase 1</fullName>
        <ecNumber>1.12.7.2</ecNumber>
    </recommendedName>
    <alternativeName>
        <fullName>CpI</fullName>
    </alternativeName>
    <alternativeName>
        <fullName>Fe-only hydrogenase</fullName>
    </alternativeName>
    <alternativeName>
        <fullName>[Fe] hydrogenase</fullName>
    </alternativeName>
</protein>
<reference key="1">
    <citation type="journal article" date="1991" name="Biochemistry">
        <title>Primary structure of hydrogenase I from Clostridium pasteurianum.</title>
        <authorList>
            <person name="Meyer J."/>
            <person name="Gagnon J."/>
        </authorList>
    </citation>
    <scope>NUCLEOTIDE SEQUENCE [GENOMIC DNA]</scope>
    <scope>PARTIAL PROTEIN SEQUENCE</scope>
    <source>
        <strain>ATCC 6013 / DSM 525 / NCIB 9486 / VKM B-1774 / W5</strain>
    </source>
</reference>
<reference evidence="8" key="2">
    <citation type="journal article" date="1998" name="Science">
        <title>X-ray crystal structure of the Fe-only hydrogenase (CpI) from Clostridium pasteurianum to 1.8-A resolution.</title>
        <authorList>
            <person name="Peters J.W."/>
            <person name="Lanzilotta W.N."/>
            <person name="Lemon B.J."/>
            <person name="Seefeldt L.C."/>
        </authorList>
    </citation>
    <scope>X-RAY CRYSTALLOGRAPHY (1.8 ANGSTROMS) IN COMPLEX WITH A BINUCLEAR IRON CENTER; IRON-SULFUR (2FE-2S) AND IRON-SULFUR (4FE-4S) CLUSTERS</scope>
    <scope>COFACTOR</scope>
</reference>
<reference evidence="6 7" key="3">
    <citation type="journal article" date="1999" name="Biochemistry">
        <title>Binding of exogenously added carbon monoxide at the active site of the iron-only hydrogenase (CpI) from Clostridium pasteurianum.</title>
        <authorList>
            <person name="Lemon B.J."/>
            <person name="Peters J.W."/>
        </authorList>
    </citation>
    <scope>X-RAY CRYSTALLOGRAPHY (2.4 ANGSTROMS) IN COMPLEX WITH A BINUCLEAR IRON CENTER; IRON-SULFUR (2FE-2S) AND IRON-SULFUR (4FE-4S) CLUSTERS</scope>
    <scope>COFACTOR</scope>
</reference>
<feature type="chain" id="PRO_0000199732" description="Iron hydrogenase 1">
    <location>
        <begin position="1"/>
        <end position="574"/>
    </location>
</feature>
<feature type="domain" description="2Fe-2S ferredoxin-type" evidence="1">
    <location>
        <begin position="1"/>
        <end position="78"/>
    </location>
</feature>
<feature type="domain" description="4Fe-4S His(Cys)3-ligated-type" evidence="3">
    <location>
        <begin position="78"/>
        <end position="117"/>
    </location>
</feature>
<feature type="domain" description="4Fe-4S ferredoxin-type 1" evidence="2">
    <location>
        <begin position="138"/>
        <end position="167"/>
    </location>
</feature>
<feature type="domain" description="4Fe-4S ferredoxin-type 2" evidence="2">
    <location>
        <begin position="181"/>
        <end position="210"/>
    </location>
</feature>
<feature type="binding site" evidence="4 5">
    <location>
        <position position="34"/>
    </location>
    <ligand>
        <name>[2Fe-2S] cluster</name>
        <dbReference type="ChEBI" id="CHEBI:190135"/>
    </ligand>
</feature>
<feature type="binding site" evidence="4 5">
    <location>
        <position position="46"/>
    </location>
    <ligand>
        <name>[2Fe-2S] cluster</name>
        <dbReference type="ChEBI" id="CHEBI:190135"/>
    </ligand>
</feature>
<feature type="binding site" evidence="4 5">
    <location>
        <position position="49"/>
    </location>
    <ligand>
        <name>[2Fe-2S] cluster</name>
        <dbReference type="ChEBI" id="CHEBI:190135"/>
    </ligand>
</feature>
<feature type="binding site" evidence="4 5">
    <location>
        <position position="62"/>
    </location>
    <ligand>
        <name>[2Fe-2S] cluster</name>
        <dbReference type="ChEBI" id="CHEBI:190135"/>
    </ligand>
</feature>
<feature type="binding site" evidence="3 4">
    <location>
        <position position="94"/>
    </location>
    <ligand>
        <name>[4Fe-4S] cluster</name>
        <dbReference type="ChEBI" id="CHEBI:49883"/>
        <label>1</label>
    </ligand>
</feature>
<feature type="binding site" evidence="3 4 5">
    <location>
        <position position="98"/>
    </location>
    <ligand>
        <name>[4Fe-4S] cluster</name>
        <dbReference type="ChEBI" id="CHEBI:49883"/>
        <label>1</label>
    </ligand>
</feature>
<feature type="binding site" evidence="3 4 5">
    <location>
        <position position="101"/>
    </location>
    <ligand>
        <name>[4Fe-4S] cluster</name>
        <dbReference type="ChEBI" id="CHEBI:49883"/>
        <label>1</label>
    </ligand>
</feature>
<feature type="binding site" evidence="3 4 5">
    <location>
        <position position="107"/>
    </location>
    <ligand>
        <name>[4Fe-4S] cluster</name>
        <dbReference type="ChEBI" id="CHEBI:49883"/>
        <label>1</label>
    </ligand>
</feature>
<feature type="binding site" evidence="4 5">
    <location>
        <position position="147"/>
    </location>
    <ligand>
        <name>[4Fe-4S] cluster</name>
        <dbReference type="ChEBI" id="CHEBI:49883"/>
        <label>2</label>
    </ligand>
</feature>
<feature type="binding site" evidence="4 5">
    <location>
        <position position="150"/>
    </location>
    <ligand>
        <name>[4Fe-4S] cluster</name>
        <dbReference type="ChEBI" id="CHEBI:49883"/>
        <label>2</label>
    </ligand>
</feature>
<feature type="binding site" evidence="4 5">
    <location>
        <position position="153"/>
    </location>
    <ligand>
        <name>[4Fe-4S] cluster</name>
        <dbReference type="ChEBI" id="CHEBI:49883"/>
        <label>2</label>
    </ligand>
</feature>
<feature type="binding site" evidence="4 5">
    <location>
        <position position="157"/>
    </location>
    <ligand>
        <name>[4Fe-4S] cluster</name>
        <dbReference type="ChEBI" id="CHEBI:49883"/>
        <label>3</label>
    </ligand>
</feature>
<feature type="binding site" evidence="4 5">
    <location>
        <position position="190"/>
    </location>
    <ligand>
        <name>[4Fe-4S] cluster</name>
        <dbReference type="ChEBI" id="CHEBI:49883"/>
        <label>3</label>
    </ligand>
</feature>
<feature type="binding site" evidence="4 5">
    <location>
        <position position="193"/>
    </location>
    <ligand>
        <name>[4Fe-4S] cluster</name>
        <dbReference type="ChEBI" id="CHEBI:49883"/>
        <label>3</label>
    </ligand>
</feature>
<feature type="binding site" evidence="4 5">
    <location>
        <position position="196"/>
    </location>
    <ligand>
        <name>[4Fe-4S] cluster</name>
        <dbReference type="ChEBI" id="CHEBI:49883"/>
        <label>3</label>
    </ligand>
</feature>
<feature type="binding site" evidence="4 5">
    <location>
        <position position="200"/>
    </location>
    <ligand>
        <name>[4Fe-4S] cluster</name>
        <dbReference type="ChEBI" id="CHEBI:49883"/>
        <label>2</label>
    </ligand>
</feature>
<feature type="binding site" evidence="4 5">
    <location>
        <position position="300"/>
    </location>
    <ligand>
        <name>[4Fe-4S] cluster</name>
        <dbReference type="ChEBI" id="CHEBI:49883"/>
        <label>4</label>
    </ligand>
</feature>
<feature type="binding site" evidence="4 5">
    <location>
        <position position="355"/>
    </location>
    <ligand>
        <name>[4Fe-4S] cluster</name>
        <dbReference type="ChEBI" id="CHEBI:49883"/>
        <label>4</label>
    </ligand>
</feature>
<feature type="binding site" evidence="4 5">
    <location>
        <position position="499"/>
    </location>
    <ligand>
        <name>[4Fe-4S] cluster</name>
        <dbReference type="ChEBI" id="CHEBI:49883"/>
        <label>4</label>
    </ligand>
</feature>
<feature type="binding site" evidence="4 5">
    <location>
        <position position="503"/>
    </location>
    <ligand>
        <name>[4Fe-4S] cluster</name>
        <dbReference type="ChEBI" id="CHEBI:49883"/>
        <label>4</label>
    </ligand>
</feature>
<feature type="binding site" evidence="4">
    <location>
        <position position="503"/>
    </location>
    <ligand>
        <name>Fe(2+)</name>
        <dbReference type="ChEBI" id="CHEBI:29033"/>
    </ligand>
</feature>
<feature type="strand" evidence="11">
    <location>
        <begin position="3"/>
        <end position="6"/>
    </location>
</feature>
<feature type="strand" evidence="11">
    <location>
        <begin position="9"/>
        <end position="12"/>
    </location>
</feature>
<feature type="helix" evidence="11">
    <location>
        <begin position="19"/>
        <end position="25"/>
    </location>
</feature>
<feature type="strand" evidence="11">
    <location>
        <begin position="42"/>
        <end position="44"/>
    </location>
</feature>
<feature type="strand" evidence="11">
    <location>
        <begin position="50"/>
        <end position="53"/>
    </location>
</feature>
<feature type="turn" evidence="11">
    <location>
        <begin position="54"/>
        <end position="56"/>
    </location>
</feature>
<feature type="strand" evidence="11">
    <location>
        <begin position="57"/>
        <end position="60"/>
    </location>
</feature>
<feature type="helix" evidence="11">
    <location>
        <begin position="61"/>
        <end position="63"/>
    </location>
</feature>
<feature type="strand" evidence="11">
    <location>
        <begin position="71"/>
        <end position="75"/>
    </location>
</feature>
<feature type="helix" evidence="11">
    <location>
        <begin position="77"/>
        <end position="91"/>
    </location>
</feature>
<feature type="turn" evidence="9">
    <location>
        <begin position="98"/>
        <end position="100"/>
    </location>
</feature>
<feature type="turn" evidence="11">
    <location>
        <begin position="102"/>
        <end position="105"/>
    </location>
</feature>
<feature type="helix" evidence="11">
    <location>
        <begin position="108"/>
        <end position="116"/>
    </location>
</feature>
<feature type="helix" evidence="11">
    <location>
        <begin position="129"/>
        <end position="131"/>
    </location>
</feature>
<feature type="strand" evidence="11">
    <location>
        <begin position="137"/>
        <end position="143"/>
    </location>
</feature>
<feature type="helix" evidence="11">
    <location>
        <begin position="144"/>
        <end position="146"/>
    </location>
</feature>
<feature type="helix" evidence="11">
    <location>
        <begin position="152"/>
        <end position="161"/>
    </location>
</feature>
<feature type="strand" evidence="11">
    <location>
        <begin position="166"/>
        <end position="171"/>
    </location>
</feature>
<feature type="strand" evidence="11">
    <location>
        <begin position="174"/>
        <end position="179"/>
    </location>
</feature>
<feature type="helix" evidence="11">
    <location>
        <begin position="180"/>
        <end position="182"/>
    </location>
</feature>
<feature type="helix" evidence="11">
    <location>
        <begin position="185"/>
        <end position="187"/>
    </location>
</feature>
<feature type="helix" evidence="11">
    <location>
        <begin position="195"/>
        <end position="199"/>
    </location>
</feature>
<feature type="strand" evidence="11">
    <location>
        <begin position="201"/>
        <end position="207"/>
    </location>
</feature>
<feature type="helix" evidence="11">
    <location>
        <begin position="211"/>
        <end position="219"/>
    </location>
</feature>
<feature type="strand" evidence="11">
    <location>
        <begin position="224"/>
        <end position="229"/>
    </location>
</feature>
<feature type="helix" evidence="11">
    <location>
        <begin position="231"/>
        <end position="235"/>
    </location>
</feature>
<feature type="helix" evidence="11">
    <location>
        <begin position="237"/>
        <end position="241"/>
    </location>
</feature>
<feature type="helix" evidence="11">
    <location>
        <begin position="250"/>
        <end position="259"/>
    </location>
</feature>
<feature type="strand" evidence="11">
    <location>
        <begin position="263"/>
        <end position="267"/>
    </location>
</feature>
<feature type="helix" evidence="11">
    <location>
        <begin position="268"/>
        <end position="289"/>
    </location>
</feature>
<feature type="strand" evidence="10">
    <location>
        <begin position="292"/>
        <end position="296"/>
    </location>
</feature>
<feature type="helix" evidence="11">
    <location>
        <begin position="301"/>
        <end position="310"/>
    </location>
</feature>
<feature type="helix" evidence="11">
    <location>
        <begin position="312"/>
        <end position="317"/>
    </location>
</feature>
<feature type="helix" evidence="11">
    <location>
        <begin position="324"/>
        <end position="332"/>
    </location>
</feature>
<feature type="helix" evidence="11">
    <location>
        <begin position="335"/>
        <end position="340"/>
    </location>
</feature>
<feature type="helix" evidence="11">
    <location>
        <begin position="344"/>
        <end position="346"/>
    </location>
</feature>
<feature type="strand" evidence="11">
    <location>
        <begin position="347"/>
        <end position="354"/>
    </location>
</feature>
<feature type="helix" evidence="11">
    <location>
        <begin position="357"/>
        <end position="362"/>
    </location>
</feature>
<feature type="strand" evidence="11">
    <location>
        <begin position="367"/>
        <end position="369"/>
    </location>
</feature>
<feature type="strand" evidence="11">
    <location>
        <begin position="372"/>
        <end position="374"/>
    </location>
</feature>
<feature type="strand" evidence="11">
    <location>
        <begin position="376"/>
        <end position="380"/>
    </location>
</feature>
<feature type="helix" evidence="11">
    <location>
        <begin position="381"/>
        <end position="390"/>
    </location>
</feature>
<feature type="helix" evidence="11">
    <location>
        <begin position="395"/>
        <end position="397"/>
    </location>
</feature>
<feature type="helix" evidence="11">
    <location>
        <begin position="405"/>
        <end position="407"/>
    </location>
</feature>
<feature type="helix" evidence="11">
    <location>
        <begin position="412"/>
        <end position="415"/>
    </location>
</feature>
<feature type="turn" evidence="11">
    <location>
        <begin position="416"/>
        <end position="418"/>
    </location>
</feature>
<feature type="helix" evidence="11">
    <location>
        <begin position="422"/>
        <end position="436"/>
    </location>
</feature>
<feature type="helix" evidence="11">
    <location>
        <begin position="446"/>
        <end position="448"/>
    </location>
</feature>
<feature type="strand" evidence="11">
    <location>
        <begin position="453"/>
        <end position="461"/>
    </location>
</feature>
<feature type="strand" evidence="11">
    <location>
        <begin position="464"/>
        <end position="473"/>
    </location>
</feature>
<feature type="helix" evidence="11">
    <location>
        <begin position="474"/>
        <end position="482"/>
    </location>
</feature>
<feature type="helix" evidence="11">
    <location>
        <begin position="485"/>
        <end position="487"/>
    </location>
</feature>
<feature type="strand" evidence="11">
    <location>
        <begin position="493"/>
        <end position="499"/>
    </location>
</feature>
<feature type="helix" evidence="11">
    <location>
        <begin position="503"/>
        <end position="505"/>
    </location>
</feature>
<feature type="helix" evidence="11">
    <location>
        <begin position="514"/>
        <end position="519"/>
    </location>
</feature>
<feature type="helix" evidence="11">
    <location>
        <begin position="522"/>
        <end position="536"/>
    </location>
</feature>
<feature type="helix" evidence="11">
    <location>
        <begin position="542"/>
        <end position="544"/>
    </location>
</feature>
<feature type="helix" evidence="11">
    <location>
        <begin position="546"/>
        <end position="554"/>
    </location>
</feature>
<feature type="helix" evidence="11">
    <location>
        <begin position="562"/>
        <end position="567"/>
    </location>
</feature>
<proteinExistence type="evidence at protein level"/>
<organism>
    <name type="scientific">Clostridium pasteurianum</name>
    <dbReference type="NCBI Taxonomy" id="1501"/>
    <lineage>
        <taxon>Bacteria</taxon>
        <taxon>Bacillati</taxon>
        <taxon>Bacillota</taxon>
        <taxon>Clostridia</taxon>
        <taxon>Eubacteriales</taxon>
        <taxon>Clostridiaceae</taxon>
        <taxon>Clostridium</taxon>
    </lineage>
</organism>
<evidence type="ECO:0000255" key="1">
    <source>
        <dbReference type="PROSITE-ProRule" id="PRU00465"/>
    </source>
</evidence>
<evidence type="ECO:0000255" key="2">
    <source>
        <dbReference type="PROSITE-ProRule" id="PRU00711"/>
    </source>
</evidence>
<evidence type="ECO:0000255" key="3">
    <source>
        <dbReference type="PROSITE-ProRule" id="PRU01184"/>
    </source>
</evidence>
<evidence type="ECO:0000269" key="4">
    <source>
    </source>
</evidence>
<evidence type="ECO:0000269" key="5">
    <source>
    </source>
</evidence>
<evidence type="ECO:0007744" key="6">
    <source>
        <dbReference type="PDB" id="1C4A"/>
    </source>
</evidence>
<evidence type="ECO:0007744" key="7">
    <source>
        <dbReference type="PDB" id="1C4C"/>
    </source>
</evidence>
<evidence type="ECO:0007744" key="8">
    <source>
        <dbReference type="PDB" id="1FEH"/>
    </source>
</evidence>
<evidence type="ECO:0007829" key="9">
    <source>
        <dbReference type="PDB" id="1C4A"/>
    </source>
</evidence>
<evidence type="ECO:0007829" key="10">
    <source>
        <dbReference type="PDB" id="4XDD"/>
    </source>
</evidence>
<evidence type="ECO:0007829" key="11">
    <source>
        <dbReference type="PDB" id="6N59"/>
    </source>
</evidence>
<sequence length="574" mass="63828">MKTIIINGVQFNTDEDTTILKFARDNNIDISALCFLNNCNNDINKCEICTVEVEGTGLVTACDTLIEDGMIINTNSDAVNEKIKSRISQLLDIHEFKCGPCNRRENCEFLKLVIKYKARASKPFLPKDKTEYVDERSKSLTVDRTKCLLCGRCVNACGKNTETYAMKFLNKNGKTIIGAEDEKCFDDTNCLLCGQCIIACPVAALSEKSHMDRVKNALNAPEKHVIVAMAPSVRASIGELFNMGFGVDVTGKIYTALRQLGFDKIFDINFGADMTIMEEATELVQRIENNGPFPMFTSCCPGWVRQAENYYPELLNNLSSAKSPQQIFGTASKTYYPSISGLDPKNVFTVTVMPCTSKKFEADRPQMEKDGLRDIDAVITTRELAKMIKDAKIPFAKLEDSEADPAMGEYSGAGAIFGATGGVMEAALRSAKDFAENAELEDIEYKQVRGLNGIKEAEVEINNNKYNVAVINGASNLFKFMKSGMINEKQYHFIEVMACHGGCVNGGGQPHVNPKDLEKVDIKKVRASVLYNQDEHLSKRKSHENTALVKMYQNYFGKPGEGRAHEILHFKYKK</sequence>
<dbReference type="EC" id="1.12.7.2"/>
<dbReference type="EMBL" id="M81737">
    <property type="protein sequence ID" value="AAA23248.1"/>
    <property type="molecule type" value="Genomic_DNA"/>
</dbReference>
<dbReference type="PIR" id="A40330">
    <property type="entry name" value="HQCL1P"/>
</dbReference>
<dbReference type="RefSeq" id="WP_004455619.1">
    <property type="nucleotide sequence ID" value="NZ_LFYL01000002.1"/>
</dbReference>
<dbReference type="PDB" id="1C4A">
    <property type="method" value="X-ray"/>
    <property type="resolution" value="2.40 A"/>
    <property type="chains" value="A=1-574"/>
</dbReference>
<dbReference type="PDB" id="1C4C">
    <property type="method" value="X-ray"/>
    <property type="resolution" value="2.40 A"/>
    <property type="chains" value="A=1-574"/>
</dbReference>
<dbReference type="PDB" id="1FEH">
    <property type="method" value="X-ray"/>
    <property type="resolution" value="1.80 A"/>
    <property type="chains" value="A=1-574"/>
</dbReference>
<dbReference type="PDB" id="3C8Y">
    <property type="method" value="X-ray"/>
    <property type="resolution" value="1.39 A"/>
    <property type="chains" value="A=1-574"/>
</dbReference>
<dbReference type="PDB" id="4XDC">
    <property type="method" value="X-ray"/>
    <property type="resolution" value="1.63 A"/>
    <property type="chains" value="A/B=1-574"/>
</dbReference>
<dbReference type="PDB" id="4XDD">
    <property type="method" value="X-ray"/>
    <property type="resolution" value="1.60 A"/>
    <property type="chains" value="A/B=1-574"/>
</dbReference>
<dbReference type="PDB" id="5BYQ">
    <property type="method" value="X-ray"/>
    <property type="resolution" value="1.73 A"/>
    <property type="chains" value="A/B=1-574"/>
</dbReference>
<dbReference type="PDB" id="5BYR">
    <property type="method" value="X-ray"/>
    <property type="resolution" value="1.82 A"/>
    <property type="chains" value="A/B=1-574"/>
</dbReference>
<dbReference type="PDB" id="5BYS">
    <property type="method" value="X-ray"/>
    <property type="resolution" value="1.93 A"/>
    <property type="chains" value="A/B=1-574"/>
</dbReference>
<dbReference type="PDB" id="5LA3">
    <property type="method" value="X-ray"/>
    <property type="resolution" value="2.29 A"/>
    <property type="chains" value="A/B=2-574"/>
</dbReference>
<dbReference type="PDB" id="5OEF">
    <property type="method" value="X-ray"/>
    <property type="resolution" value="2.05 A"/>
    <property type="chains" value="A/B=1-574"/>
</dbReference>
<dbReference type="PDB" id="6GLY">
    <property type="method" value="X-ray"/>
    <property type="resolution" value="2.09 A"/>
    <property type="chains" value="A/B=1-574"/>
</dbReference>
<dbReference type="PDB" id="6GLZ">
    <property type="method" value="X-ray"/>
    <property type="resolution" value="2.02 A"/>
    <property type="chains" value="A/B=1-574"/>
</dbReference>
<dbReference type="PDB" id="6GM0">
    <property type="method" value="X-ray"/>
    <property type="resolution" value="2.11 A"/>
    <property type="chains" value="A/B=1-574"/>
</dbReference>
<dbReference type="PDB" id="6GM1">
    <property type="method" value="X-ray"/>
    <property type="resolution" value="2.05 A"/>
    <property type="chains" value="A/B=1-574"/>
</dbReference>
<dbReference type="PDB" id="6GM2">
    <property type="method" value="X-ray"/>
    <property type="resolution" value="2.76 A"/>
    <property type="chains" value="A/B=1-574"/>
</dbReference>
<dbReference type="PDB" id="6GM3">
    <property type="method" value="X-ray"/>
    <property type="resolution" value="2.22 A"/>
    <property type="chains" value="A/B=1-574"/>
</dbReference>
<dbReference type="PDB" id="6GM4">
    <property type="method" value="X-ray"/>
    <property type="resolution" value="1.97 A"/>
    <property type="chains" value="A/B=1-574"/>
</dbReference>
<dbReference type="PDB" id="6GM8">
    <property type="method" value="X-ray"/>
    <property type="resolution" value="1.96 A"/>
    <property type="chains" value="A/B=1-574"/>
</dbReference>
<dbReference type="PDB" id="6H63">
    <property type="method" value="X-ray"/>
    <property type="resolution" value="2.08 A"/>
    <property type="chains" value="A/B=1-574"/>
</dbReference>
<dbReference type="PDB" id="6N59">
    <property type="method" value="X-ray"/>
    <property type="resolution" value="1.02 A"/>
    <property type="chains" value="A=1-574"/>
</dbReference>
<dbReference type="PDB" id="6N6P">
    <property type="method" value="X-ray"/>
    <property type="resolution" value="1.95 A"/>
    <property type="chains" value="A=1-574"/>
</dbReference>
<dbReference type="PDB" id="6NAC">
    <property type="method" value="X-ray"/>
    <property type="resolution" value="1.55 A"/>
    <property type="chains" value="A=1-574"/>
</dbReference>
<dbReference type="PDB" id="6YF4">
    <property type="method" value="X-ray"/>
    <property type="resolution" value="1.77 A"/>
    <property type="chains" value="A/B=1-574"/>
</dbReference>
<dbReference type="PDB" id="7QHF">
    <property type="method" value="X-ray"/>
    <property type="resolution" value="1.63 A"/>
    <property type="chains" value="A/B=1-574"/>
</dbReference>
<dbReference type="PDB" id="8AIO">
    <property type="method" value="X-ray"/>
    <property type="resolution" value="1.52 A"/>
    <property type="chains" value="A/B=1-574"/>
</dbReference>
<dbReference type="PDB" id="8AJ6">
    <property type="method" value="X-ray"/>
    <property type="resolution" value="1.50 A"/>
    <property type="chains" value="A/B=1-574"/>
</dbReference>
<dbReference type="PDB" id="8ALN">
    <property type="method" value="X-ray"/>
    <property type="resolution" value="1.34 A"/>
    <property type="chains" value="A/B=1-574"/>
</dbReference>
<dbReference type="PDB" id="8AP2">
    <property type="method" value="X-ray"/>
    <property type="resolution" value="1.39 A"/>
    <property type="chains" value="A/B=1-574"/>
</dbReference>
<dbReference type="PDB" id="8CJY">
    <property type="method" value="X-ray"/>
    <property type="resolution" value="1.60 A"/>
    <property type="chains" value="A/B=1-574"/>
</dbReference>
<dbReference type="PDB" id="8PVM">
    <property type="method" value="X-ray"/>
    <property type="resolution" value="1.38 A"/>
    <property type="chains" value="A/B=1-574"/>
</dbReference>
<dbReference type="PDB" id="8QM3">
    <property type="method" value="X-ray"/>
    <property type="resolution" value="1.53 A"/>
    <property type="chains" value="A/B=1-574"/>
</dbReference>
<dbReference type="PDB" id="8RU7">
    <property type="method" value="X-ray"/>
    <property type="resolution" value="1.32 A"/>
    <property type="chains" value="A=512-524"/>
</dbReference>
<dbReference type="PDBsum" id="1C4A"/>
<dbReference type="PDBsum" id="1C4C"/>
<dbReference type="PDBsum" id="1FEH"/>
<dbReference type="PDBsum" id="3C8Y"/>
<dbReference type="PDBsum" id="4XDC"/>
<dbReference type="PDBsum" id="4XDD"/>
<dbReference type="PDBsum" id="5BYQ"/>
<dbReference type="PDBsum" id="5BYR"/>
<dbReference type="PDBsum" id="5BYS"/>
<dbReference type="PDBsum" id="5LA3"/>
<dbReference type="PDBsum" id="5OEF"/>
<dbReference type="PDBsum" id="6GLY"/>
<dbReference type="PDBsum" id="6GLZ"/>
<dbReference type="PDBsum" id="6GM0"/>
<dbReference type="PDBsum" id="6GM1"/>
<dbReference type="PDBsum" id="6GM2"/>
<dbReference type="PDBsum" id="6GM3"/>
<dbReference type="PDBsum" id="6GM4"/>
<dbReference type="PDBsum" id="6GM8"/>
<dbReference type="PDBsum" id="6H63"/>
<dbReference type="PDBsum" id="6N59"/>
<dbReference type="PDBsum" id="6N6P"/>
<dbReference type="PDBsum" id="6NAC"/>
<dbReference type="PDBsum" id="6YF4"/>
<dbReference type="PDBsum" id="7QHF"/>
<dbReference type="PDBsum" id="8AIO"/>
<dbReference type="PDBsum" id="8AJ6"/>
<dbReference type="PDBsum" id="8ALN"/>
<dbReference type="PDBsum" id="8AP2"/>
<dbReference type="PDBsum" id="8CJY"/>
<dbReference type="PDBsum" id="8PVM"/>
<dbReference type="PDBsum" id="8QM3"/>
<dbReference type="PDBsum" id="8RU7"/>
<dbReference type="SMR" id="P29166"/>
<dbReference type="GeneID" id="93072288"/>
<dbReference type="KEGG" id="ag:AAA23248"/>
<dbReference type="OrthoDB" id="9805142at2"/>
<dbReference type="EvolutionaryTrace" id="P29166"/>
<dbReference type="GO" id="GO:0051539">
    <property type="term" value="F:4 iron, 4 sulfur cluster binding"/>
    <property type="evidence" value="ECO:0007669"/>
    <property type="project" value="UniProtKB-KW"/>
</dbReference>
<dbReference type="GO" id="GO:0008901">
    <property type="term" value="F:ferredoxin hydrogenase activity"/>
    <property type="evidence" value="ECO:0007669"/>
    <property type="project" value="UniProtKB-EC"/>
</dbReference>
<dbReference type="GO" id="GO:0005506">
    <property type="term" value="F:iron ion binding"/>
    <property type="evidence" value="ECO:0007669"/>
    <property type="project" value="InterPro"/>
</dbReference>
<dbReference type="CDD" id="cd00207">
    <property type="entry name" value="fer2"/>
    <property type="match status" value="1"/>
</dbReference>
<dbReference type="FunFam" id="3.30.70.20:FF:000035">
    <property type="entry name" value="Iron hydrogenase 1"/>
    <property type="match status" value="1"/>
</dbReference>
<dbReference type="Gene3D" id="3.10.20.740">
    <property type="match status" value="1"/>
</dbReference>
<dbReference type="Gene3D" id="3.30.70.20">
    <property type="match status" value="1"/>
</dbReference>
<dbReference type="Gene3D" id="3.40.50.1780">
    <property type="match status" value="1"/>
</dbReference>
<dbReference type="Gene3D" id="3.40.950.10">
    <property type="entry name" value="Fe-only Hydrogenase (Larger Subunit), Chain L, domain 3"/>
    <property type="match status" value="1"/>
</dbReference>
<dbReference type="Gene3D" id="4.10.260.20">
    <property type="entry name" value="Iron hydrogenase, small subunit"/>
    <property type="match status" value="1"/>
</dbReference>
<dbReference type="InterPro" id="IPR036010">
    <property type="entry name" value="2Fe-2S_ferredoxin-like_sf"/>
</dbReference>
<dbReference type="InterPro" id="IPR001041">
    <property type="entry name" value="2Fe-2S_ferredoxin-type"/>
</dbReference>
<dbReference type="InterPro" id="IPR017896">
    <property type="entry name" value="4Fe4S_Fe-S-bd"/>
</dbReference>
<dbReference type="InterPro" id="IPR017900">
    <property type="entry name" value="4Fe4S_Fe_S_CS"/>
</dbReference>
<dbReference type="InterPro" id="IPR050340">
    <property type="entry name" value="Cytosolic_Fe-S_CAF"/>
</dbReference>
<dbReference type="InterPro" id="IPR009016">
    <property type="entry name" value="Fe_hydrogenase"/>
</dbReference>
<dbReference type="InterPro" id="IPR004108">
    <property type="entry name" value="Fe_hydrogenase_lsu_C"/>
</dbReference>
<dbReference type="InterPro" id="IPR003149">
    <property type="entry name" value="Fe_hydrogenase_ssu"/>
</dbReference>
<dbReference type="InterPro" id="IPR036991">
    <property type="entry name" value="Fe_hydrogenase_ssu_sf"/>
</dbReference>
<dbReference type="InterPro" id="IPR013352">
    <property type="entry name" value="Fe_hydrogenase_subset"/>
</dbReference>
<dbReference type="InterPro" id="IPR055150">
    <property type="entry name" value="Fe_hydrogense_Fe-S_bd"/>
</dbReference>
<dbReference type="InterPro" id="IPR019574">
    <property type="entry name" value="NADH_UbQ_OxRdtase_Gsu_4Fe4S-bd"/>
</dbReference>
<dbReference type="NCBIfam" id="TIGR02512">
    <property type="entry name" value="FeFe_hydrog_A"/>
    <property type="match status" value="1"/>
</dbReference>
<dbReference type="NCBIfam" id="NF040762">
    <property type="entry name" value="Hydr_FeFe_Clost"/>
    <property type="match status" value="1"/>
</dbReference>
<dbReference type="PANTHER" id="PTHR11615">
    <property type="entry name" value="NITRATE, FORMATE, IRON DEHYDROGENASE"/>
    <property type="match status" value="1"/>
</dbReference>
<dbReference type="Pfam" id="PF02906">
    <property type="entry name" value="Fe_hyd_lg_C"/>
    <property type="match status" value="1"/>
</dbReference>
<dbReference type="Pfam" id="PF02256">
    <property type="entry name" value="Fe_hyd_SSU"/>
    <property type="match status" value="1"/>
</dbReference>
<dbReference type="Pfam" id="PF22609">
    <property type="entry name" value="Fe_hydrogense_Fe-S_bd"/>
    <property type="match status" value="1"/>
</dbReference>
<dbReference type="Pfam" id="PF13510">
    <property type="entry name" value="Fer2_4"/>
    <property type="match status" value="1"/>
</dbReference>
<dbReference type="Pfam" id="PF12838">
    <property type="entry name" value="Fer4_7"/>
    <property type="match status" value="1"/>
</dbReference>
<dbReference type="SMART" id="SM00902">
    <property type="entry name" value="Fe_hyd_SSU"/>
    <property type="match status" value="1"/>
</dbReference>
<dbReference type="SUPFAM" id="SSF54292">
    <property type="entry name" value="2Fe-2S ferredoxin-like"/>
    <property type="match status" value="1"/>
</dbReference>
<dbReference type="SUPFAM" id="SSF54862">
    <property type="entry name" value="4Fe-4S ferredoxins"/>
    <property type="match status" value="1"/>
</dbReference>
<dbReference type="SUPFAM" id="SSF53920">
    <property type="entry name" value="Fe-only hydrogenase"/>
    <property type="match status" value="1"/>
</dbReference>
<dbReference type="PROSITE" id="PS51085">
    <property type="entry name" value="2FE2S_FER_2"/>
    <property type="match status" value="1"/>
</dbReference>
<dbReference type="PROSITE" id="PS00198">
    <property type="entry name" value="4FE4S_FER_1"/>
    <property type="match status" value="2"/>
</dbReference>
<dbReference type="PROSITE" id="PS51379">
    <property type="entry name" value="4FE4S_FER_2"/>
    <property type="match status" value="2"/>
</dbReference>
<dbReference type="PROSITE" id="PS51839">
    <property type="entry name" value="4FE4S_HC3"/>
    <property type="match status" value="1"/>
</dbReference>
<comment type="catalytic activity">
    <reaction>
        <text>H2 + 2 oxidized [2Fe-2S]-[ferredoxin] = 2 reduced [2Fe-2S]-[ferredoxin] + 2 H(+)</text>
        <dbReference type="Rhea" id="RHEA:17445"/>
        <dbReference type="Rhea" id="RHEA-COMP:10000"/>
        <dbReference type="Rhea" id="RHEA-COMP:10001"/>
        <dbReference type="ChEBI" id="CHEBI:15378"/>
        <dbReference type="ChEBI" id="CHEBI:18276"/>
        <dbReference type="ChEBI" id="CHEBI:33737"/>
        <dbReference type="ChEBI" id="CHEBI:33738"/>
        <dbReference type="EC" id="1.12.7.2"/>
    </reaction>
</comment>
<comment type="cofactor">
    <cofactor evidence="4 5">
        <name>[2Fe-2S] cluster</name>
        <dbReference type="ChEBI" id="CHEBI:190135"/>
    </cofactor>
    <text evidence="4 5">Binds 1 [2Fe-2S] cluster per subunit.</text>
</comment>
<comment type="cofactor">
    <cofactor evidence="4 5">
        <name>[4Fe-4S] cluster</name>
        <dbReference type="ChEBI" id="CHEBI:49883"/>
    </cofactor>
    <text evidence="4 5">Binds 4 [4Fe-4S] clusters per subunit.</text>
</comment>
<comment type="cofactor">
    <cofactor evidence="4 5">
        <name>Fe(2+)</name>
        <dbReference type="ChEBI" id="CHEBI:29033"/>
    </cofactor>
    <text evidence="4">Contains an active site Fe binuclear center, which is coordinated by Cys-503 and by non-protein ligands including 2 sulfur atoms, 1 water and 5 cyanide or carbon monoxide ligands.</text>
</comment>
<comment type="subunit">
    <text>Monomer.</text>
</comment>
<keyword id="KW-0002">3D-structure</keyword>
<keyword id="KW-0004">4Fe-4S</keyword>
<keyword id="KW-0903">Direct protein sequencing</keyword>
<keyword id="KW-0408">Iron</keyword>
<keyword id="KW-0411">Iron-sulfur</keyword>
<keyword id="KW-0479">Metal-binding</keyword>
<keyword id="KW-0560">Oxidoreductase</keyword>
<keyword id="KW-0677">Repeat</keyword>